<accession>Q7N485</accession>
<sequence length="268" mass="29534">MERYEQLFKQLESRKQGAFVPFVTLGDPTPELSLKIIDALITGGADALELSIPFSDPLADGPTIQNANLRAFSSNVTPTLCFELLTKIRAKYPDIPIGLLMYANLVFHHGIDEFYRRCKDTDIDSVLVADVPMSESRPFRTAAMKHGIAPIFICPPDAEDELLREIASYGRGYTYLLSRAGVTGIERRGEKPLNHLVNKLREYHAAPPLQGFGISEPKQVKETLASGAAGAISGSAIVKIIEENLSQPEIMLKELTEFVSKMKSATQL</sequence>
<gene>
    <name evidence="1" type="primary">trpA</name>
    <name type="ordered locus">plu2467</name>
</gene>
<dbReference type="EC" id="4.2.1.20" evidence="1"/>
<dbReference type="EMBL" id="BX571867">
    <property type="protein sequence ID" value="CAE14841.1"/>
    <property type="molecule type" value="Genomic_DNA"/>
</dbReference>
<dbReference type="RefSeq" id="WP_011146691.1">
    <property type="nucleotide sequence ID" value="NC_005126.1"/>
</dbReference>
<dbReference type="SMR" id="Q7N485"/>
<dbReference type="STRING" id="243265.plu2467"/>
<dbReference type="GeneID" id="48848733"/>
<dbReference type="KEGG" id="plu:plu2467"/>
<dbReference type="eggNOG" id="COG0159">
    <property type="taxonomic scope" value="Bacteria"/>
</dbReference>
<dbReference type="HOGENOM" id="CLU_016734_0_4_6"/>
<dbReference type="OrthoDB" id="9804578at2"/>
<dbReference type="UniPathway" id="UPA00035">
    <property type="reaction ID" value="UER00044"/>
</dbReference>
<dbReference type="Proteomes" id="UP000002514">
    <property type="component" value="Chromosome"/>
</dbReference>
<dbReference type="GO" id="GO:0005829">
    <property type="term" value="C:cytosol"/>
    <property type="evidence" value="ECO:0007669"/>
    <property type="project" value="TreeGrafter"/>
</dbReference>
<dbReference type="GO" id="GO:0004834">
    <property type="term" value="F:tryptophan synthase activity"/>
    <property type="evidence" value="ECO:0007669"/>
    <property type="project" value="UniProtKB-UniRule"/>
</dbReference>
<dbReference type="CDD" id="cd04724">
    <property type="entry name" value="Tryptophan_synthase_alpha"/>
    <property type="match status" value="1"/>
</dbReference>
<dbReference type="FunFam" id="3.20.20.70:FF:000037">
    <property type="entry name" value="Tryptophan synthase alpha chain"/>
    <property type="match status" value="1"/>
</dbReference>
<dbReference type="Gene3D" id="3.20.20.70">
    <property type="entry name" value="Aldolase class I"/>
    <property type="match status" value="1"/>
</dbReference>
<dbReference type="HAMAP" id="MF_00131">
    <property type="entry name" value="Trp_synth_alpha"/>
    <property type="match status" value="1"/>
</dbReference>
<dbReference type="InterPro" id="IPR013785">
    <property type="entry name" value="Aldolase_TIM"/>
</dbReference>
<dbReference type="InterPro" id="IPR011060">
    <property type="entry name" value="RibuloseP-bd_barrel"/>
</dbReference>
<dbReference type="InterPro" id="IPR002028">
    <property type="entry name" value="Trp_synthase_suA"/>
</dbReference>
<dbReference type="NCBIfam" id="TIGR00262">
    <property type="entry name" value="trpA"/>
    <property type="match status" value="1"/>
</dbReference>
<dbReference type="PANTHER" id="PTHR43406:SF1">
    <property type="entry name" value="TRYPTOPHAN SYNTHASE ALPHA CHAIN, CHLOROPLASTIC"/>
    <property type="match status" value="1"/>
</dbReference>
<dbReference type="PANTHER" id="PTHR43406">
    <property type="entry name" value="TRYPTOPHAN SYNTHASE, ALPHA CHAIN"/>
    <property type="match status" value="1"/>
</dbReference>
<dbReference type="Pfam" id="PF00290">
    <property type="entry name" value="Trp_syntA"/>
    <property type="match status" value="1"/>
</dbReference>
<dbReference type="SUPFAM" id="SSF51366">
    <property type="entry name" value="Ribulose-phoshate binding barrel"/>
    <property type="match status" value="1"/>
</dbReference>
<feature type="chain" id="PRO_0000098820" description="Tryptophan synthase alpha chain">
    <location>
        <begin position="1"/>
        <end position="268"/>
    </location>
</feature>
<feature type="active site" description="Proton acceptor" evidence="1">
    <location>
        <position position="49"/>
    </location>
</feature>
<feature type="active site" description="Proton acceptor" evidence="1">
    <location>
        <position position="60"/>
    </location>
</feature>
<keyword id="KW-0028">Amino-acid biosynthesis</keyword>
<keyword id="KW-0057">Aromatic amino acid biosynthesis</keyword>
<keyword id="KW-0456">Lyase</keyword>
<keyword id="KW-1185">Reference proteome</keyword>
<keyword id="KW-0822">Tryptophan biosynthesis</keyword>
<comment type="function">
    <text evidence="1">The alpha subunit is responsible for the aldol cleavage of indoleglycerol phosphate to indole and glyceraldehyde 3-phosphate.</text>
</comment>
<comment type="catalytic activity">
    <reaction evidence="1">
        <text>(1S,2R)-1-C-(indol-3-yl)glycerol 3-phosphate + L-serine = D-glyceraldehyde 3-phosphate + L-tryptophan + H2O</text>
        <dbReference type="Rhea" id="RHEA:10532"/>
        <dbReference type="ChEBI" id="CHEBI:15377"/>
        <dbReference type="ChEBI" id="CHEBI:33384"/>
        <dbReference type="ChEBI" id="CHEBI:57912"/>
        <dbReference type="ChEBI" id="CHEBI:58866"/>
        <dbReference type="ChEBI" id="CHEBI:59776"/>
        <dbReference type="EC" id="4.2.1.20"/>
    </reaction>
</comment>
<comment type="pathway">
    <text evidence="1">Amino-acid biosynthesis; L-tryptophan biosynthesis; L-tryptophan from chorismate: step 5/5.</text>
</comment>
<comment type="subunit">
    <text evidence="1">Tetramer of two alpha and two beta chains.</text>
</comment>
<comment type="similarity">
    <text evidence="1">Belongs to the TrpA family.</text>
</comment>
<organism>
    <name type="scientific">Photorhabdus laumondii subsp. laumondii (strain DSM 15139 / CIP 105565 / TT01)</name>
    <name type="common">Photorhabdus luminescens subsp. laumondii</name>
    <dbReference type="NCBI Taxonomy" id="243265"/>
    <lineage>
        <taxon>Bacteria</taxon>
        <taxon>Pseudomonadati</taxon>
        <taxon>Pseudomonadota</taxon>
        <taxon>Gammaproteobacteria</taxon>
        <taxon>Enterobacterales</taxon>
        <taxon>Morganellaceae</taxon>
        <taxon>Photorhabdus</taxon>
    </lineage>
</organism>
<protein>
    <recommendedName>
        <fullName evidence="1">Tryptophan synthase alpha chain</fullName>
        <ecNumber evidence="1">4.2.1.20</ecNumber>
    </recommendedName>
</protein>
<reference key="1">
    <citation type="journal article" date="2003" name="Nat. Biotechnol.">
        <title>The genome sequence of the entomopathogenic bacterium Photorhabdus luminescens.</title>
        <authorList>
            <person name="Duchaud E."/>
            <person name="Rusniok C."/>
            <person name="Frangeul L."/>
            <person name="Buchrieser C."/>
            <person name="Givaudan A."/>
            <person name="Taourit S."/>
            <person name="Bocs S."/>
            <person name="Boursaux-Eude C."/>
            <person name="Chandler M."/>
            <person name="Charles J.-F."/>
            <person name="Dassa E."/>
            <person name="Derose R."/>
            <person name="Derzelle S."/>
            <person name="Freyssinet G."/>
            <person name="Gaudriault S."/>
            <person name="Medigue C."/>
            <person name="Lanois A."/>
            <person name="Powell K."/>
            <person name="Siguier P."/>
            <person name="Vincent R."/>
            <person name="Wingate V."/>
            <person name="Zouine M."/>
            <person name="Glaser P."/>
            <person name="Boemare N."/>
            <person name="Danchin A."/>
            <person name="Kunst F."/>
        </authorList>
    </citation>
    <scope>NUCLEOTIDE SEQUENCE [LARGE SCALE GENOMIC DNA]</scope>
    <source>
        <strain>DSM 15139 / CIP 105565 / TT01</strain>
    </source>
</reference>
<proteinExistence type="inferred from homology"/>
<name>TRPA_PHOLL</name>
<evidence type="ECO:0000255" key="1">
    <source>
        <dbReference type="HAMAP-Rule" id="MF_00131"/>
    </source>
</evidence>